<sequence>MAKKVQAYVKLQVAAGMANPSPPVGPALGQQGVNIMEFCKAFNAKTESIEKGLPIPVVITVYSDRSFTFVTKTPPAAVLLKKAAGIKSGSGVPNKDKVGKVTSAQVREIAETKAADMTGSDVDAMMRSIEGTAHSMGLVVEG</sequence>
<feature type="chain" id="PRO_0000258244" description="Large ribosomal subunit protein uL11">
    <location>
        <begin position="1"/>
        <end position="142"/>
    </location>
</feature>
<keyword id="KW-0488">Methylation</keyword>
<keyword id="KW-0687">Ribonucleoprotein</keyword>
<keyword id="KW-0689">Ribosomal protein</keyword>
<keyword id="KW-0694">RNA-binding</keyword>
<keyword id="KW-0699">rRNA-binding</keyword>
<evidence type="ECO:0000255" key="1">
    <source>
        <dbReference type="HAMAP-Rule" id="MF_00736"/>
    </source>
</evidence>
<evidence type="ECO:0000305" key="2"/>
<dbReference type="EMBL" id="CP000305">
    <property type="protein sequence ID" value="ABG16548.1"/>
    <property type="molecule type" value="Genomic_DNA"/>
</dbReference>
<dbReference type="EMBL" id="ACNQ01000004">
    <property type="protein sequence ID" value="EEO78466.1"/>
    <property type="molecule type" value="Genomic_DNA"/>
</dbReference>
<dbReference type="RefSeq" id="WP_002210672.1">
    <property type="nucleotide sequence ID" value="NZ_ACNQ01000004.1"/>
</dbReference>
<dbReference type="SMR" id="Q1CN82"/>
<dbReference type="GeneID" id="96663772"/>
<dbReference type="KEGG" id="ypn:YPN_0215"/>
<dbReference type="HOGENOM" id="CLU_074237_2_0_6"/>
<dbReference type="Proteomes" id="UP000008936">
    <property type="component" value="Chromosome"/>
</dbReference>
<dbReference type="GO" id="GO:0022625">
    <property type="term" value="C:cytosolic large ribosomal subunit"/>
    <property type="evidence" value="ECO:0007669"/>
    <property type="project" value="TreeGrafter"/>
</dbReference>
<dbReference type="GO" id="GO:0070180">
    <property type="term" value="F:large ribosomal subunit rRNA binding"/>
    <property type="evidence" value="ECO:0007669"/>
    <property type="project" value="UniProtKB-UniRule"/>
</dbReference>
<dbReference type="GO" id="GO:0003735">
    <property type="term" value="F:structural constituent of ribosome"/>
    <property type="evidence" value="ECO:0007669"/>
    <property type="project" value="InterPro"/>
</dbReference>
<dbReference type="GO" id="GO:0006412">
    <property type="term" value="P:translation"/>
    <property type="evidence" value="ECO:0007669"/>
    <property type="project" value="UniProtKB-UniRule"/>
</dbReference>
<dbReference type="CDD" id="cd00349">
    <property type="entry name" value="Ribosomal_L11"/>
    <property type="match status" value="1"/>
</dbReference>
<dbReference type="FunFam" id="1.10.10.250:FF:000001">
    <property type="entry name" value="50S ribosomal protein L11"/>
    <property type="match status" value="1"/>
</dbReference>
<dbReference type="FunFam" id="3.30.1550.10:FF:000001">
    <property type="entry name" value="50S ribosomal protein L11"/>
    <property type="match status" value="1"/>
</dbReference>
<dbReference type="Gene3D" id="1.10.10.250">
    <property type="entry name" value="Ribosomal protein L11, C-terminal domain"/>
    <property type="match status" value="1"/>
</dbReference>
<dbReference type="Gene3D" id="3.30.1550.10">
    <property type="entry name" value="Ribosomal protein L11/L12, N-terminal domain"/>
    <property type="match status" value="1"/>
</dbReference>
<dbReference type="HAMAP" id="MF_00736">
    <property type="entry name" value="Ribosomal_uL11"/>
    <property type="match status" value="1"/>
</dbReference>
<dbReference type="InterPro" id="IPR000911">
    <property type="entry name" value="Ribosomal_uL11"/>
</dbReference>
<dbReference type="InterPro" id="IPR006519">
    <property type="entry name" value="Ribosomal_uL11_bac-typ"/>
</dbReference>
<dbReference type="InterPro" id="IPR020783">
    <property type="entry name" value="Ribosomal_uL11_C"/>
</dbReference>
<dbReference type="InterPro" id="IPR036769">
    <property type="entry name" value="Ribosomal_uL11_C_sf"/>
</dbReference>
<dbReference type="InterPro" id="IPR020785">
    <property type="entry name" value="Ribosomal_uL11_CS"/>
</dbReference>
<dbReference type="InterPro" id="IPR020784">
    <property type="entry name" value="Ribosomal_uL11_N"/>
</dbReference>
<dbReference type="InterPro" id="IPR036796">
    <property type="entry name" value="Ribosomal_uL11_N_sf"/>
</dbReference>
<dbReference type="NCBIfam" id="TIGR01632">
    <property type="entry name" value="L11_bact"/>
    <property type="match status" value="1"/>
</dbReference>
<dbReference type="PANTHER" id="PTHR11661">
    <property type="entry name" value="60S RIBOSOMAL PROTEIN L12"/>
    <property type="match status" value="1"/>
</dbReference>
<dbReference type="PANTHER" id="PTHR11661:SF1">
    <property type="entry name" value="LARGE RIBOSOMAL SUBUNIT PROTEIN UL11M"/>
    <property type="match status" value="1"/>
</dbReference>
<dbReference type="Pfam" id="PF00298">
    <property type="entry name" value="Ribosomal_L11"/>
    <property type="match status" value="1"/>
</dbReference>
<dbReference type="Pfam" id="PF03946">
    <property type="entry name" value="Ribosomal_L11_N"/>
    <property type="match status" value="1"/>
</dbReference>
<dbReference type="SMART" id="SM00649">
    <property type="entry name" value="RL11"/>
    <property type="match status" value="1"/>
</dbReference>
<dbReference type="SUPFAM" id="SSF54747">
    <property type="entry name" value="Ribosomal L11/L12e N-terminal domain"/>
    <property type="match status" value="1"/>
</dbReference>
<dbReference type="SUPFAM" id="SSF46906">
    <property type="entry name" value="Ribosomal protein L11, C-terminal domain"/>
    <property type="match status" value="1"/>
</dbReference>
<dbReference type="PROSITE" id="PS00359">
    <property type="entry name" value="RIBOSOMAL_L11"/>
    <property type="match status" value="1"/>
</dbReference>
<gene>
    <name evidence="1" type="primary">rplK</name>
    <name type="ordered locus">YPN_0215</name>
    <name type="ORF">YP516_0192</name>
</gene>
<organism>
    <name type="scientific">Yersinia pestis bv. Antiqua (strain Nepal516)</name>
    <dbReference type="NCBI Taxonomy" id="377628"/>
    <lineage>
        <taxon>Bacteria</taxon>
        <taxon>Pseudomonadati</taxon>
        <taxon>Pseudomonadota</taxon>
        <taxon>Gammaproteobacteria</taxon>
        <taxon>Enterobacterales</taxon>
        <taxon>Yersiniaceae</taxon>
        <taxon>Yersinia</taxon>
    </lineage>
</organism>
<accession>Q1CN82</accession>
<accession>C4GNE2</accession>
<reference key="1">
    <citation type="journal article" date="2006" name="J. Bacteriol.">
        <title>Complete genome sequence of Yersinia pestis strains Antiqua and Nepal516: evidence of gene reduction in an emerging pathogen.</title>
        <authorList>
            <person name="Chain P.S.G."/>
            <person name="Hu P."/>
            <person name="Malfatti S.A."/>
            <person name="Radnedge L."/>
            <person name="Larimer F."/>
            <person name="Vergez L.M."/>
            <person name="Worsham P."/>
            <person name="Chu M.C."/>
            <person name="Andersen G.L."/>
        </authorList>
    </citation>
    <scope>NUCLEOTIDE SEQUENCE [LARGE SCALE GENOMIC DNA]</scope>
    <source>
        <strain>Nepal516</strain>
    </source>
</reference>
<reference key="2">
    <citation type="submission" date="2009-04" db="EMBL/GenBank/DDBJ databases">
        <title>Yersinia pestis Nepal516A whole genome shotgun sequencing project.</title>
        <authorList>
            <person name="Plunkett G. III"/>
            <person name="Anderson B.D."/>
            <person name="Baumler D.J."/>
            <person name="Burland V."/>
            <person name="Cabot E.L."/>
            <person name="Glasner J.D."/>
            <person name="Mau B."/>
            <person name="Neeno-Eckwall E."/>
            <person name="Perna N.T."/>
            <person name="Munk A.C."/>
            <person name="Tapia R."/>
            <person name="Green L.D."/>
            <person name="Rogers Y.C."/>
            <person name="Detter J.C."/>
            <person name="Bruce D.C."/>
            <person name="Brettin T.S."/>
        </authorList>
    </citation>
    <scope>NUCLEOTIDE SEQUENCE [LARGE SCALE GENOMIC DNA]</scope>
    <source>
        <strain>Nepal516</strain>
    </source>
</reference>
<name>RL11_YERPN</name>
<comment type="function">
    <text evidence="1">Forms part of the ribosomal stalk which helps the ribosome interact with GTP-bound translation factors.</text>
</comment>
<comment type="subunit">
    <text evidence="1">Part of the ribosomal stalk of the 50S ribosomal subunit. Interacts with L10 and the large rRNA to form the base of the stalk. L10 forms an elongated spine to which L12 dimers bind in a sequential fashion forming a multimeric L10(L12)X complex.</text>
</comment>
<comment type="PTM">
    <text evidence="1">One or more lysine residues are methylated.</text>
</comment>
<comment type="similarity">
    <text evidence="1">Belongs to the universal ribosomal protein uL11 family.</text>
</comment>
<protein>
    <recommendedName>
        <fullName evidence="1">Large ribosomal subunit protein uL11</fullName>
    </recommendedName>
    <alternativeName>
        <fullName evidence="2">50S ribosomal protein L11</fullName>
    </alternativeName>
</protein>
<proteinExistence type="inferred from homology"/>